<accession>Q0K7F5</accession>
<dbReference type="EC" id="3.4.11.1" evidence="1"/>
<dbReference type="EC" id="3.4.11.10" evidence="1"/>
<dbReference type="EMBL" id="AM260479">
    <property type="protein sequence ID" value="CAJ94066.1"/>
    <property type="molecule type" value="Genomic_DNA"/>
</dbReference>
<dbReference type="RefSeq" id="WP_011615946.1">
    <property type="nucleotide sequence ID" value="NC_008313.1"/>
</dbReference>
<dbReference type="SMR" id="Q0K7F5"/>
<dbReference type="STRING" id="381666.H16_A2990"/>
<dbReference type="MEROPS" id="M17.003"/>
<dbReference type="KEGG" id="reh:H16_A2990"/>
<dbReference type="PATRIC" id="fig|381666.6.peg.3388"/>
<dbReference type="eggNOG" id="COG0260">
    <property type="taxonomic scope" value="Bacteria"/>
</dbReference>
<dbReference type="HOGENOM" id="CLU_013734_2_2_4"/>
<dbReference type="OrthoDB" id="9809354at2"/>
<dbReference type="Proteomes" id="UP000008210">
    <property type="component" value="Chromosome 1"/>
</dbReference>
<dbReference type="GO" id="GO:0005737">
    <property type="term" value="C:cytoplasm"/>
    <property type="evidence" value="ECO:0007669"/>
    <property type="project" value="UniProtKB-SubCell"/>
</dbReference>
<dbReference type="GO" id="GO:0030145">
    <property type="term" value="F:manganese ion binding"/>
    <property type="evidence" value="ECO:0007669"/>
    <property type="project" value="UniProtKB-UniRule"/>
</dbReference>
<dbReference type="GO" id="GO:0070006">
    <property type="term" value="F:metalloaminopeptidase activity"/>
    <property type="evidence" value="ECO:0007669"/>
    <property type="project" value="InterPro"/>
</dbReference>
<dbReference type="GO" id="GO:0006508">
    <property type="term" value="P:proteolysis"/>
    <property type="evidence" value="ECO:0007669"/>
    <property type="project" value="UniProtKB-KW"/>
</dbReference>
<dbReference type="CDD" id="cd00433">
    <property type="entry name" value="Peptidase_M17"/>
    <property type="match status" value="1"/>
</dbReference>
<dbReference type="FunFam" id="3.40.630.10:FF:000004">
    <property type="entry name" value="Probable cytosol aminopeptidase"/>
    <property type="match status" value="1"/>
</dbReference>
<dbReference type="Gene3D" id="3.40.220.10">
    <property type="entry name" value="Leucine Aminopeptidase, subunit E, domain 1"/>
    <property type="match status" value="1"/>
</dbReference>
<dbReference type="Gene3D" id="3.40.630.10">
    <property type="entry name" value="Zn peptidases"/>
    <property type="match status" value="1"/>
</dbReference>
<dbReference type="HAMAP" id="MF_00181">
    <property type="entry name" value="Cytosol_peptidase_M17"/>
    <property type="match status" value="1"/>
</dbReference>
<dbReference type="InterPro" id="IPR011356">
    <property type="entry name" value="Leucine_aapep/pepB"/>
</dbReference>
<dbReference type="InterPro" id="IPR043472">
    <property type="entry name" value="Macro_dom-like"/>
</dbReference>
<dbReference type="InterPro" id="IPR000819">
    <property type="entry name" value="Peptidase_M17_C"/>
</dbReference>
<dbReference type="InterPro" id="IPR023042">
    <property type="entry name" value="Peptidase_M17_leu_NH2_pept"/>
</dbReference>
<dbReference type="InterPro" id="IPR008283">
    <property type="entry name" value="Peptidase_M17_N"/>
</dbReference>
<dbReference type="NCBIfam" id="NF002073">
    <property type="entry name" value="PRK00913.1-2"/>
    <property type="match status" value="1"/>
</dbReference>
<dbReference type="NCBIfam" id="NF002074">
    <property type="entry name" value="PRK00913.1-4"/>
    <property type="match status" value="1"/>
</dbReference>
<dbReference type="NCBIfam" id="NF002077">
    <property type="entry name" value="PRK00913.2-4"/>
    <property type="match status" value="1"/>
</dbReference>
<dbReference type="PANTHER" id="PTHR11963:SF23">
    <property type="entry name" value="CYTOSOL AMINOPEPTIDASE"/>
    <property type="match status" value="1"/>
</dbReference>
<dbReference type="PANTHER" id="PTHR11963">
    <property type="entry name" value="LEUCINE AMINOPEPTIDASE-RELATED"/>
    <property type="match status" value="1"/>
</dbReference>
<dbReference type="Pfam" id="PF00883">
    <property type="entry name" value="Peptidase_M17"/>
    <property type="match status" value="1"/>
</dbReference>
<dbReference type="Pfam" id="PF02789">
    <property type="entry name" value="Peptidase_M17_N"/>
    <property type="match status" value="1"/>
</dbReference>
<dbReference type="PRINTS" id="PR00481">
    <property type="entry name" value="LAMNOPPTDASE"/>
</dbReference>
<dbReference type="SUPFAM" id="SSF52949">
    <property type="entry name" value="Macro domain-like"/>
    <property type="match status" value="1"/>
</dbReference>
<dbReference type="SUPFAM" id="SSF53187">
    <property type="entry name" value="Zn-dependent exopeptidases"/>
    <property type="match status" value="1"/>
</dbReference>
<dbReference type="PROSITE" id="PS00631">
    <property type="entry name" value="CYTOSOL_AP"/>
    <property type="match status" value="1"/>
</dbReference>
<feature type="chain" id="PRO_1000019962" description="Probable cytosol aminopeptidase">
    <location>
        <begin position="1"/>
        <end position="512"/>
    </location>
</feature>
<feature type="active site" evidence="1">
    <location>
        <position position="296"/>
    </location>
</feature>
<feature type="active site" evidence="1">
    <location>
        <position position="370"/>
    </location>
</feature>
<feature type="binding site" evidence="1">
    <location>
        <position position="284"/>
    </location>
    <ligand>
        <name>Mn(2+)</name>
        <dbReference type="ChEBI" id="CHEBI:29035"/>
        <label>2</label>
    </ligand>
</feature>
<feature type="binding site" evidence="1">
    <location>
        <position position="289"/>
    </location>
    <ligand>
        <name>Mn(2+)</name>
        <dbReference type="ChEBI" id="CHEBI:29035"/>
        <label>1</label>
    </ligand>
</feature>
<feature type="binding site" evidence="1">
    <location>
        <position position="289"/>
    </location>
    <ligand>
        <name>Mn(2+)</name>
        <dbReference type="ChEBI" id="CHEBI:29035"/>
        <label>2</label>
    </ligand>
</feature>
<feature type="binding site" evidence="1">
    <location>
        <position position="307"/>
    </location>
    <ligand>
        <name>Mn(2+)</name>
        <dbReference type="ChEBI" id="CHEBI:29035"/>
        <label>2</label>
    </ligand>
</feature>
<feature type="binding site" evidence="1">
    <location>
        <position position="366"/>
    </location>
    <ligand>
        <name>Mn(2+)</name>
        <dbReference type="ChEBI" id="CHEBI:29035"/>
        <label>1</label>
    </ligand>
</feature>
<feature type="binding site" evidence="1">
    <location>
        <position position="368"/>
    </location>
    <ligand>
        <name>Mn(2+)</name>
        <dbReference type="ChEBI" id="CHEBI:29035"/>
        <label>1</label>
    </ligand>
</feature>
<feature type="binding site" evidence="1">
    <location>
        <position position="368"/>
    </location>
    <ligand>
        <name>Mn(2+)</name>
        <dbReference type="ChEBI" id="CHEBI:29035"/>
        <label>2</label>
    </ligand>
</feature>
<sequence length="512" mass="53988">MEFSTKALDWSKAGQNGFLATKTDCLVVGLFEGQNLAGVAKALDVATKGLVGRLVKQGDFEGKRGTQLMLHEVAGVGAARVLLVGLGKEADFSDKAFADAVRTAVRALSSTRAASALWCLAQQAPQQRDVAWAVITTITLVREAGYRLLERHPGLKRANANGKPNGNDKSSLRKVVIAVDTGNARAATQAVVRGTAIANGMELTRDLGNLPSNICTPTYLANTARGIAKRHKLKAEVLGRKQIEALNMGAFLAVTKGSEEPPQFIVLRYDGAGAKQAPVVLVGKGITFDTGGISLKPGEGMDEMKYDMCGAASVLGTIQAVAEMGLKLNVIAVVPTCENMPSGIATKPGDVVTSMSGQTIEILNTDAEGRLILCDALTYVERFKPAAVIDVATLTGACIIALGHINSGLYARSDALADALLQAGRRAMDTAWRMPLDDEYQDQLKSNFADMGNIGGRPAGSVTAACFLSRFTEKYDWAHLDIAGTAWKSGAAKGATGRPVPLLAQFLMDRAA</sequence>
<keyword id="KW-0031">Aminopeptidase</keyword>
<keyword id="KW-0963">Cytoplasm</keyword>
<keyword id="KW-0378">Hydrolase</keyword>
<keyword id="KW-0464">Manganese</keyword>
<keyword id="KW-0479">Metal-binding</keyword>
<keyword id="KW-0645">Protease</keyword>
<keyword id="KW-1185">Reference proteome</keyword>
<reference key="1">
    <citation type="journal article" date="2006" name="Nat. Biotechnol.">
        <title>Genome sequence of the bioplastic-producing 'Knallgas' bacterium Ralstonia eutropha H16.</title>
        <authorList>
            <person name="Pohlmann A."/>
            <person name="Fricke W.F."/>
            <person name="Reinecke F."/>
            <person name="Kusian B."/>
            <person name="Liesegang H."/>
            <person name="Cramm R."/>
            <person name="Eitinger T."/>
            <person name="Ewering C."/>
            <person name="Poetter M."/>
            <person name="Schwartz E."/>
            <person name="Strittmatter A."/>
            <person name="Voss I."/>
            <person name="Gottschalk G."/>
            <person name="Steinbuechel A."/>
            <person name="Friedrich B."/>
            <person name="Bowien B."/>
        </authorList>
    </citation>
    <scope>NUCLEOTIDE SEQUENCE [LARGE SCALE GENOMIC DNA]</scope>
    <source>
        <strain>ATCC 17699 / DSM 428 / KCTC 22496 / NCIMB 10442 / H16 / Stanier 337</strain>
    </source>
</reference>
<organism>
    <name type="scientific">Cupriavidus necator (strain ATCC 17699 / DSM 428 / KCTC 22496 / NCIMB 10442 / H16 / Stanier 337)</name>
    <name type="common">Ralstonia eutropha</name>
    <dbReference type="NCBI Taxonomy" id="381666"/>
    <lineage>
        <taxon>Bacteria</taxon>
        <taxon>Pseudomonadati</taxon>
        <taxon>Pseudomonadota</taxon>
        <taxon>Betaproteobacteria</taxon>
        <taxon>Burkholderiales</taxon>
        <taxon>Burkholderiaceae</taxon>
        <taxon>Cupriavidus</taxon>
    </lineage>
</organism>
<name>AMPA_CUPNH</name>
<evidence type="ECO:0000255" key="1">
    <source>
        <dbReference type="HAMAP-Rule" id="MF_00181"/>
    </source>
</evidence>
<comment type="function">
    <text evidence="1">Presumably involved in the processing and regular turnover of intracellular proteins. Catalyzes the removal of unsubstituted N-terminal amino acids from various peptides.</text>
</comment>
<comment type="catalytic activity">
    <reaction evidence="1">
        <text>Release of an N-terminal amino acid, Xaa-|-Yaa-, in which Xaa is preferably Leu, but may be other amino acids including Pro although not Arg or Lys, and Yaa may be Pro. Amino acid amides and methyl esters are also readily hydrolyzed, but rates on arylamides are exceedingly low.</text>
        <dbReference type="EC" id="3.4.11.1"/>
    </reaction>
</comment>
<comment type="catalytic activity">
    <reaction evidence="1">
        <text>Release of an N-terminal amino acid, preferentially leucine, but not glutamic or aspartic acids.</text>
        <dbReference type="EC" id="3.4.11.10"/>
    </reaction>
</comment>
<comment type="cofactor">
    <cofactor evidence="1">
        <name>Mn(2+)</name>
        <dbReference type="ChEBI" id="CHEBI:29035"/>
    </cofactor>
    <text evidence="1">Binds 2 manganese ions per subunit.</text>
</comment>
<comment type="subcellular location">
    <subcellularLocation>
        <location evidence="1">Cytoplasm</location>
    </subcellularLocation>
</comment>
<comment type="similarity">
    <text evidence="1">Belongs to the peptidase M17 family.</text>
</comment>
<proteinExistence type="inferred from homology"/>
<protein>
    <recommendedName>
        <fullName evidence="1">Probable cytosol aminopeptidase</fullName>
        <ecNumber evidence="1">3.4.11.1</ecNumber>
    </recommendedName>
    <alternativeName>
        <fullName evidence="1">Leucine aminopeptidase</fullName>
        <shortName evidence="1">LAP</shortName>
        <ecNumber evidence="1">3.4.11.10</ecNumber>
    </alternativeName>
    <alternativeName>
        <fullName evidence="1">Leucyl aminopeptidase</fullName>
    </alternativeName>
</protein>
<gene>
    <name evidence="1" type="primary">pepA</name>
    <name type="ordered locus">H16_A2990</name>
</gene>